<keyword id="KW-0687">Ribonucleoprotein</keyword>
<keyword id="KW-0689">Ribosomal protein</keyword>
<keyword id="KW-0694">RNA-binding</keyword>
<keyword id="KW-0699">rRNA-binding</keyword>
<accession>Q48VU4</accession>
<sequence length="114" mass="12431">MAEITSAKAMARTVRVSPRKTRLVLDLIRGKKVADAIAILKFTPNKAARVIEKTLNSAIANAENNFGLEKANLVVSETFANEGPTMKRFRPRAKGSASPINKRTTHVTVVVSEK</sequence>
<proteinExistence type="inferred from homology"/>
<dbReference type="EMBL" id="CP000056">
    <property type="protein sequence ID" value="AAX71162.1"/>
    <property type="molecule type" value="Genomic_DNA"/>
</dbReference>
<dbReference type="RefSeq" id="WP_002986651.1">
    <property type="nucleotide sequence ID" value="NC_007296.2"/>
</dbReference>
<dbReference type="SMR" id="Q48VU4"/>
<dbReference type="GeneID" id="83703909"/>
<dbReference type="KEGG" id="spb:M28_Spy0048"/>
<dbReference type="HOGENOM" id="CLU_083987_3_3_9"/>
<dbReference type="GO" id="GO:0022625">
    <property type="term" value="C:cytosolic large ribosomal subunit"/>
    <property type="evidence" value="ECO:0007669"/>
    <property type="project" value="TreeGrafter"/>
</dbReference>
<dbReference type="GO" id="GO:0019843">
    <property type="term" value="F:rRNA binding"/>
    <property type="evidence" value="ECO:0007669"/>
    <property type="project" value="UniProtKB-UniRule"/>
</dbReference>
<dbReference type="GO" id="GO:0003735">
    <property type="term" value="F:structural constituent of ribosome"/>
    <property type="evidence" value="ECO:0007669"/>
    <property type="project" value="InterPro"/>
</dbReference>
<dbReference type="GO" id="GO:0006412">
    <property type="term" value="P:translation"/>
    <property type="evidence" value="ECO:0007669"/>
    <property type="project" value="UniProtKB-UniRule"/>
</dbReference>
<dbReference type="CDD" id="cd00336">
    <property type="entry name" value="Ribosomal_L22"/>
    <property type="match status" value="1"/>
</dbReference>
<dbReference type="FunFam" id="3.90.470.10:FF:000001">
    <property type="entry name" value="50S ribosomal protein L22"/>
    <property type="match status" value="1"/>
</dbReference>
<dbReference type="Gene3D" id="3.90.470.10">
    <property type="entry name" value="Ribosomal protein L22/L17"/>
    <property type="match status" value="1"/>
</dbReference>
<dbReference type="HAMAP" id="MF_01331_B">
    <property type="entry name" value="Ribosomal_uL22_B"/>
    <property type="match status" value="1"/>
</dbReference>
<dbReference type="InterPro" id="IPR001063">
    <property type="entry name" value="Ribosomal_uL22"/>
</dbReference>
<dbReference type="InterPro" id="IPR005727">
    <property type="entry name" value="Ribosomal_uL22_bac/chlpt-type"/>
</dbReference>
<dbReference type="InterPro" id="IPR047867">
    <property type="entry name" value="Ribosomal_uL22_bac/org-type"/>
</dbReference>
<dbReference type="InterPro" id="IPR018260">
    <property type="entry name" value="Ribosomal_uL22_CS"/>
</dbReference>
<dbReference type="InterPro" id="IPR036394">
    <property type="entry name" value="Ribosomal_uL22_sf"/>
</dbReference>
<dbReference type="NCBIfam" id="TIGR01044">
    <property type="entry name" value="rplV_bact"/>
    <property type="match status" value="1"/>
</dbReference>
<dbReference type="PANTHER" id="PTHR13501">
    <property type="entry name" value="CHLOROPLAST 50S RIBOSOMAL PROTEIN L22-RELATED"/>
    <property type="match status" value="1"/>
</dbReference>
<dbReference type="PANTHER" id="PTHR13501:SF8">
    <property type="entry name" value="LARGE RIBOSOMAL SUBUNIT PROTEIN UL22M"/>
    <property type="match status" value="1"/>
</dbReference>
<dbReference type="Pfam" id="PF00237">
    <property type="entry name" value="Ribosomal_L22"/>
    <property type="match status" value="1"/>
</dbReference>
<dbReference type="SUPFAM" id="SSF54843">
    <property type="entry name" value="Ribosomal protein L22"/>
    <property type="match status" value="1"/>
</dbReference>
<dbReference type="PROSITE" id="PS00464">
    <property type="entry name" value="RIBOSOMAL_L22"/>
    <property type="match status" value="1"/>
</dbReference>
<feature type="chain" id="PRO_0000243212" description="Large ribosomal subunit protein uL22">
    <location>
        <begin position="1"/>
        <end position="114"/>
    </location>
</feature>
<reference key="1">
    <citation type="journal article" date="2005" name="J. Infect. Dis.">
        <title>Genome sequence of a serotype M28 strain of group A Streptococcus: potential new insights into puerperal sepsis and bacterial disease specificity.</title>
        <authorList>
            <person name="Green N.M."/>
            <person name="Zhang S."/>
            <person name="Porcella S.F."/>
            <person name="Nagiec M.J."/>
            <person name="Barbian K.D."/>
            <person name="Beres S.B."/>
            <person name="Lefebvre R.B."/>
            <person name="Musser J.M."/>
        </authorList>
    </citation>
    <scope>NUCLEOTIDE SEQUENCE [LARGE SCALE GENOMIC DNA]</scope>
    <source>
        <strain>MGAS6180</strain>
    </source>
</reference>
<gene>
    <name evidence="1" type="primary">rplV</name>
    <name type="ordered locus">M28_Spy0048</name>
</gene>
<protein>
    <recommendedName>
        <fullName evidence="1">Large ribosomal subunit protein uL22</fullName>
    </recommendedName>
    <alternativeName>
        <fullName evidence="2">50S ribosomal protein L22</fullName>
    </alternativeName>
</protein>
<comment type="function">
    <text evidence="1">This protein binds specifically to 23S rRNA; its binding is stimulated by other ribosomal proteins, e.g. L4, L17, and L20. It is important during the early stages of 50S assembly. It makes multiple contacts with different domains of the 23S rRNA in the assembled 50S subunit and ribosome (By similarity).</text>
</comment>
<comment type="function">
    <text evidence="1">The globular domain of the protein is located near the polypeptide exit tunnel on the outside of the subunit, while an extended beta-hairpin is found that lines the wall of the exit tunnel in the center of the 70S ribosome.</text>
</comment>
<comment type="subunit">
    <text evidence="1">Part of the 50S ribosomal subunit.</text>
</comment>
<comment type="similarity">
    <text evidence="1">Belongs to the universal ribosomal protein uL22 family.</text>
</comment>
<organism>
    <name type="scientific">Streptococcus pyogenes serotype M28 (strain MGAS6180)</name>
    <dbReference type="NCBI Taxonomy" id="319701"/>
    <lineage>
        <taxon>Bacteria</taxon>
        <taxon>Bacillati</taxon>
        <taxon>Bacillota</taxon>
        <taxon>Bacilli</taxon>
        <taxon>Lactobacillales</taxon>
        <taxon>Streptococcaceae</taxon>
        <taxon>Streptococcus</taxon>
    </lineage>
</organism>
<evidence type="ECO:0000255" key="1">
    <source>
        <dbReference type="HAMAP-Rule" id="MF_01331"/>
    </source>
</evidence>
<evidence type="ECO:0000305" key="2"/>
<name>RL22_STRPM</name>